<accession>A2SE05</accession>
<gene>
    <name evidence="1" type="primary">hisC</name>
    <name type="ordered locus">Mpe_A0832</name>
</gene>
<proteinExistence type="inferred from homology"/>
<feature type="chain" id="PRO_0000319774" description="Histidinol-phosphate aminotransferase">
    <location>
        <begin position="1"/>
        <end position="371"/>
    </location>
</feature>
<feature type="modified residue" description="N6-(pyridoxal phosphate)lysine" evidence="1">
    <location>
        <position position="232"/>
    </location>
</feature>
<name>HIS8_METPP</name>
<organism>
    <name type="scientific">Methylibium petroleiphilum (strain ATCC BAA-1232 / LMG 22953 / PM1)</name>
    <dbReference type="NCBI Taxonomy" id="420662"/>
    <lineage>
        <taxon>Bacteria</taxon>
        <taxon>Pseudomonadati</taxon>
        <taxon>Pseudomonadota</taxon>
        <taxon>Betaproteobacteria</taxon>
        <taxon>Burkholderiales</taxon>
        <taxon>Sphaerotilaceae</taxon>
        <taxon>Methylibium</taxon>
    </lineage>
</organism>
<protein>
    <recommendedName>
        <fullName evidence="1">Histidinol-phosphate aminotransferase</fullName>
        <ecNumber evidence="1">2.6.1.9</ecNumber>
    </recommendedName>
    <alternativeName>
        <fullName evidence="1">Imidazole acetol-phosphate transaminase</fullName>
    </alternativeName>
</protein>
<sequence>MSSSNSNNGGPPLAPRLARFVRQDVQNMHAYAIQPSDGFVKLDAMENPHRLPAALQAELGRRLGALAINRYPGTRTDELRAALARHAGLPPGCALMLGNGSDELISLLSMACDVPGATVLAPLPGFVMYEMSARLQGLRFVGVPLTADFELDAAAMLAAVREHRPALTYLAYPNNPTANLWDDAVIERVVDAVREHGGLVVIDEAYQPFASRSYIDRLAHHDHVLLMRTLSKFGLAGVRLGYLMGPTALVAEIDKVRPPYNVSVLNCEAALFALEHEDEFARQAAVLRAERARLLDALRAMSGATPFPSEANMVLVRVPDAKAAFEGLKARGVLVKNVSGLHPLLANCLRLTVGLPEENDQMIAALKGILS</sequence>
<reference key="1">
    <citation type="journal article" date="2007" name="J. Bacteriol.">
        <title>Whole-genome analysis of the methyl tert-butyl ether-degrading beta-proteobacterium Methylibium petroleiphilum PM1.</title>
        <authorList>
            <person name="Kane S.R."/>
            <person name="Chakicherla A.Y."/>
            <person name="Chain P.S.G."/>
            <person name="Schmidt R."/>
            <person name="Shin M.W."/>
            <person name="Legler T.C."/>
            <person name="Scow K.M."/>
            <person name="Larimer F.W."/>
            <person name="Lucas S.M."/>
            <person name="Richardson P.M."/>
            <person name="Hristova K.R."/>
        </authorList>
    </citation>
    <scope>NUCLEOTIDE SEQUENCE [LARGE SCALE GENOMIC DNA]</scope>
    <source>
        <strain>ATCC BAA-1232 / LMG 22953 / PM1</strain>
    </source>
</reference>
<comment type="catalytic activity">
    <reaction evidence="1">
        <text>L-histidinol phosphate + 2-oxoglutarate = 3-(imidazol-4-yl)-2-oxopropyl phosphate + L-glutamate</text>
        <dbReference type="Rhea" id="RHEA:23744"/>
        <dbReference type="ChEBI" id="CHEBI:16810"/>
        <dbReference type="ChEBI" id="CHEBI:29985"/>
        <dbReference type="ChEBI" id="CHEBI:57766"/>
        <dbReference type="ChEBI" id="CHEBI:57980"/>
        <dbReference type="EC" id="2.6.1.9"/>
    </reaction>
</comment>
<comment type="cofactor">
    <cofactor evidence="1">
        <name>pyridoxal 5'-phosphate</name>
        <dbReference type="ChEBI" id="CHEBI:597326"/>
    </cofactor>
</comment>
<comment type="pathway">
    <text evidence="1">Amino-acid biosynthesis; L-histidine biosynthesis; L-histidine from 5-phospho-alpha-D-ribose 1-diphosphate: step 7/9.</text>
</comment>
<comment type="subunit">
    <text evidence="1">Homodimer.</text>
</comment>
<comment type="similarity">
    <text evidence="1">Belongs to the class-II pyridoxal-phosphate-dependent aminotransferase family. Histidinol-phosphate aminotransferase subfamily.</text>
</comment>
<dbReference type="EC" id="2.6.1.9" evidence="1"/>
<dbReference type="EMBL" id="CP000555">
    <property type="protein sequence ID" value="ABM93794.1"/>
    <property type="molecule type" value="Genomic_DNA"/>
</dbReference>
<dbReference type="RefSeq" id="WP_011828432.1">
    <property type="nucleotide sequence ID" value="NC_008825.1"/>
</dbReference>
<dbReference type="SMR" id="A2SE05"/>
<dbReference type="STRING" id="420662.Mpe_A0832"/>
<dbReference type="KEGG" id="mpt:Mpe_A0832"/>
<dbReference type="eggNOG" id="COG0079">
    <property type="taxonomic scope" value="Bacteria"/>
</dbReference>
<dbReference type="HOGENOM" id="CLU_017584_3_1_4"/>
<dbReference type="UniPathway" id="UPA00031">
    <property type="reaction ID" value="UER00012"/>
</dbReference>
<dbReference type="Proteomes" id="UP000000366">
    <property type="component" value="Chromosome"/>
</dbReference>
<dbReference type="GO" id="GO:0004400">
    <property type="term" value="F:histidinol-phosphate transaminase activity"/>
    <property type="evidence" value="ECO:0007669"/>
    <property type="project" value="UniProtKB-UniRule"/>
</dbReference>
<dbReference type="GO" id="GO:0030170">
    <property type="term" value="F:pyridoxal phosphate binding"/>
    <property type="evidence" value="ECO:0007669"/>
    <property type="project" value="InterPro"/>
</dbReference>
<dbReference type="GO" id="GO:0000105">
    <property type="term" value="P:L-histidine biosynthetic process"/>
    <property type="evidence" value="ECO:0007669"/>
    <property type="project" value="UniProtKB-UniRule"/>
</dbReference>
<dbReference type="CDD" id="cd00609">
    <property type="entry name" value="AAT_like"/>
    <property type="match status" value="1"/>
</dbReference>
<dbReference type="Gene3D" id="3.90.1150.10">
    <property type="entry name" value="Aspartate Aminotransferase, domain 1"/>
    <property type="match status" value="1"/>
</dbReference>
<dbReference type="Gene3D" id="3.40.640.10">
    <property type="entry name" value="Type I PLP-dependent aspartate aminotransferase-like (Major domain)"/>
    <property type="match status" value="1"/>
</dbReference>
<dbReference type="HAMAP" id="MF_01023">
    <property type="entry name" value="HisC_aminotrans_2"/>
    <property type="match status" value="1"/>
</dbReference>
<dbReference type="InterPro" id="IPR004839">
    <property type="entry name" value="Aminotransferase_I/II_large"/>
</dbReference>
<dbReference type="InterPro" id="IPR005861">
    <property type="entry name" value="HisP_aminotrans"/>
</dbReference>
<dbReference type="InterPro" id="IPR015424">
    <property type="entry name" value="PyrdxlP-dep_Trfase"/>
</dbReference>
<dbReference type="InterPro" id="IPR015421">
    <property type="entry name" value="PyrdxlP-dep_Trfase_major"/>
</dbReference>
<dbReference type="InterPro" id="IPR015422">
    <property type="entry name" value="PyrdxlP-dep_Trfase_small"/>
</dbReference>
<dbReference type="NCBIfam" id="TIGR01141">
    <property type="entry name" value="hisC"/>
    <property type="match status" value="1"/>
</dbReference>
<dbReference type="PANTHER" id="PTHR42885:SF2">
    <property type="entry name" value="HISTIDINOL-PHOSPHATE AMINOTRANSFERASE"/>
    <property type="match status" value="1"/>
</dbReference>
<dbReference type="PANTHER" id="PTHR42885">
    <property type="entry name" value="HISTIDINOL-PHOSPHATE AMINOTRANSFERASE-RELATED"/>
    <property type="match status" value="1"/>
</dbReference>
<dbReference type="Pfam" id="PF00155">
    <property type="entry name" value="Aminotran_1_2"/>
    <property type="match status" value="1"/>
</dbReference>
<dbReference type="SUPFAM" id="SSF53383">
    <property type="entry name" value="PLP-dependent transferases"/>
    <property type="match status" value="1"/>
</dbReference>
<keyword id="KW-0028">Amino-acid biosynthesis</keyword>
<keyword id="KW-0032">Aminotransferase</keyword>
<keyword id="KW-0368">Histidine biosynthesis</keyword>
<keyword id="KW-0663">Pyridoxal phosphate</keyword>
<keyword id="KW-1185">Reference proteome</keyword>
<keyword id="KW-0808">Transferase</keyword>
<evidence type="ECO:0000255" key="1">
    <source>
        <dbReference type="HAMAP-Rule" id="MF_01023"/>
    </source>
</evidence>